<proteinExistence type="evidence at protein level"/>
<organism>
    <name type="scientific">Mesocricetus auratus</name>
    <name type="common">Golden hamster</name>
    <dbReference type="NCBI Taxonomy" id="10036"/>
    <lineage>
        <taxon>Eukaryota</taxon>
        <taxon>Metazoa</taxon>
        <taxon>Chordata</taxon>
        <taxon>Craniata</taxon>
        <taxon>Vertebrata</taxon>
        <taxon>Euteleostomi</taxon>
        <taxon>Mammalia</taxon>
        <taxon>Eutheria</taxon>
        <taxon>Euarchontoglires</taxon>
        <taxon>Glires</taxon>
        <taxon>Rodentia</taxon>
        <taxon>Myomorpha</taxon>
        <taxon>Muroidea</taxon>
        <taxon>Cricetidae</taxon>
        <taxon>Cricetinae</taxon>
        <taxon>Mesocricetus</taxon>
    </lineage>
</organism>
<name>K2C8_MESAU</name>
<sequence>MSTSGPRAFSSRFASFIDKVRWSLLQQQKSNMDNMFESYINNLRDVDEAYMNKVELESRLEGLTDEINFLRQIHEEEIRSLDMDSIIAEVRHGDDLRRLALDIEIATYRK</sequence>
<reference key="1">
    <citation type="journal article" date="2010" name="Asian J. Androl.">
        <title>Glucose-regulated protein precursor (GRP78) and tumor rejection antigen (GP96) are unique to hamster caput epididymal spermatozoa.</title>
        <authorList>
            <person name="Kameshwari D.B."/>
            <person name="Bhande S."/>
            <person name="Sundaram C.S."/>
            <person name="Kota V."/>
            <person name="Siva A.B."/>
            <person name="Shivaji S."/>
        </authorList>
    </citation>
    <scope>IDENTIFICATION BY MASS SPECTROMETRY</scope>
</reference>
<evidence type="ECO:0000250" key="1"/>
<evidence type="ECO:0000250" key="2">
    <source>
        <dbReference type="UniProtKB" id="P05787"/>
    </source>
</evidence>
<evidence type="ECO:0000250" key="3">
    <source>
        <dbReference type="UniProtKB" id="P11679"/>
    </source>
</evidence>
<evidence type="ECO:0000250" key="4">
    <source>
        <dbReference type="UniProtKB" id="Q10758"/>
    </source>
</evidence>
<evidence type="ECO:0000255" key="5"/>
<evidence type="ECO:0000255" key="6">
    <source>
        <dbReference type="PROSITE-ProRule" id="PRU01188"/>
    </source>
</evidence>
<evidence type="ECO:0000305" key="7"/>
<keyword id="KW-0007">Acetylation</keyword>
<keyword id="KW-0175">Coiled coil</keyword>
<keyword id="KW-0963">Cytoplasm</keyword>
<keyword id="KW-0325">Glycoprotein</keyword>
<keyword id="KW-0403">Intermediate filament</keyword>
<keyword id="KW-1017">Isopeptide bond</keyword>
<keyword id="KW-0416">Keratin</keyword>
<keyword id="KW-0488">Methylation</keyword>
<keyword id="KW-0539">Nucleus</keyword>
<keyword id="KW-0597">Phosphoprotein</keyword>
<keyword id="KW-1185">Reference proteome</keyword>
<keyword id="KW-0832">Ubl conjugation</keyword>
<dbReference type="SMR" id="P86247"/>
<dbReference type="Proteomes" id="UP000189706">
    <property type="component" value="Unplaced"/>
</dbReference>
<dbReference type="GO" id="GO:0005737">
    <property type="term" value="C:cytoplasm"/>
    <property type="evidence" value="ECO:0000250"/>
    <property type="project" value="UniProtKB"/>
</dbReference>
<dbReference type="GO" id="GO:0005882">
    <property type="term" value="C:intermediate filament"/>
    <property type="evidence" value="ECO:0007669"/>
    <property type="project" value="UniProtKB-KW"/>
</dbReference>
<dbReference type="GO" id="GO:0016363">
    <property type="term" value="C:nuclear matrix"/>
    <property type="evidence" value="ECO:0007669"/>
    <property type="project" value="UniProtKB-SubCell"/>
</dbReference>
<dbReference type="GO" id="GO:0005654">
    <property type="term" value="C:nucleoplasm"/>
    <property type="evidence" value="ECO:0007669"/>
    <property type="project" value="UniProtKB-SubCell"/>
</dbReference>
<dbReference type="Gene3D" id="1.20.5.1160">
    <property type="entry name" value="Vasodilator-stimulated phosphoprotein"/>
    <property type="match status" value="1"/>
</dbReference>
<dbReference type="InterPro" id="IPR039008">
    <property type="entry name" value="IF_rod_dom"/>
</dbReference>
<dbReference type="PANTHER" id="PTHR45616">
    <property type="entry name" value="GATA-TYPE DOMAIN-CONTAINING PROTEIN"/>
    <property type="match status" value="1"/>
</dbReference>
<dbReference type="PANTHER" id="PTHR45616:SF26">
    <property type="entry name" value="KERATIN, TYPE II CYTOSKELETAL 8"/>
    <property type="match status" value="1"/>
</dbReference>
<dbReference type="Pfam" id="PF00038">
    <property type="entry name" value="Filament"/>
    <property type="match status" value="1"/>
</dbReference>
<dbReference type="PROSITE" id="PS51842">
    <property type="entry name" value="IF_ROD_2"/>
    <property type="match status" value="1"/>
</dbReference>
<comment type="function">
    <text evidence="2">Together with KRT19, helps to link the contractile apparatus to dystrophin at the costameres of striated muscle.</text>
</comment>
<comment type="subunit">
    <text evidence="2 3 4">Heterotetramer of two type I and two type II keratins (By similarity). Forms a heterodimer with KRT18 (By similarity). Associates with KRT20 (By similarity). Interacts with PNN. When associated with KRT19, interacts with DMD (By similarity). Interacts with TCHP (By similarity). Interacts with APEX1 (By similarity). Interacts with GPER1 (By similarity). Interacts with EPPK1 (By similarity). Interacts with PKP1 and PKP2 (By similarity).</text>
</comment>
<comment type="subcellular location">
    <subcellularLocation>
        <location evidence="4">Cytoplasm</location>
    </subcellularLocation>
    <subcellularLocation>
        <location evidence="4">Nucleus</location>
        <location evidence="4">Nucleoplasm</location>
    </subcellularLocation>
    <subcellularLocation>
        <location evidence="4">Nucleus matrix</location>
    </subcellularLocation>
</comment>
<comment type="PTM">
    <text evidence="1">O-glycosylated. O-GlcNAcylation at multiple sites increases solubility, and decreases stability by inducing proteasomal degradation (By similarity).</text>
</comment>
<comment type="PTM">
    <text evidence="1">O-glycosylated (O-GlcNAcylated), in a cell cycle-dependent manner.</text>
</comment>
<comment type="miscellaneous">
    <text evidence="7">There are two types of cytoskeletal and microfibrillar keratin: I (acidic; 40-55 kDa) and II (neutral to basic; 56-70 kDa).</text>
</comment>
<comment type="similarity">
    <text evidence="6">Belongs to the intermediate filament family.</text>
</comment>
<feature type="chain" id="PRO_0000394419" description="Keratin, type II cytoskeletal 8">
    <location>
        <begin position="1" status="less than"/>
        <end position="110" status="greater than"/>
    </location>
</feature>
<feature type="domain" description="IF rod" evidence="6">
    <location>
        <begin position="1" status="less than"/>
        <end position="110" status="greater than"/>
    </location>
</feature>
<feature type="region of interest" description="Head" evidence="5">
    <location>
        <begin position="1" status="less than"/>
        <end position="12" status="greater than"/>
    </location>
</feature>
<feature type="region of interest" description="Coil 1A" evidence="5">
    <location>
        <begin position="13" status="less than"/>
        <end position="25"/>
    </location>
</feature>
<feature type="region of interest" description="Linker 1" evidence="5">
    <location>
        <begin position="26"/>
        <end position="39"/>
    </location>
</feature>
<feature type="region of interest" description="Coil 1B" evidence="5">
    <location>
        <begin position="40"/>
        <end position="79" status="greater than"/>
    </location>
</feature>
<feature type="region of interest" description="Linker 12" evidence="5">
    <location>
        <begin position="80" status="less than"/>
        <end position="86"/>
    </location>
</feature>
<feature type="region of interest" description="Coil 2" evidence="5">
    <location>
        <begin position="87"/>
        <end position="110" status="greater than"/>
    </location>
</feature>
<feature type="region of interest" description="Necessary for interaction with PNN" evidence="2">
    <location>
        <begin position="88"/>
        <end position="99"/>
    </location>
</feature>
<feature type="modified residue" description="Phosphoserine" evidence="2">
    <location>
        <position position="2"/>
    </location>
</feature>
<feature type="modified residue" description="Phosphoserine" evidence="2">
    <location>
        <position position="4"/>
    </location>
</feature>
<feature type="modified residue" description="Phosphoserine" evidence="2">
    <location>
        <position position="10"/>
    </location>
</feature>
<feature type="modified residue" description="Phosphoserine" evidence="2">
    <location>
        <position position="11"/>
    </location>
</feature>
<feature type="modified residue" description="Omega-N-methylarginine" evidence="2">
    <location>
        <position position="12"/>
    </location>
</feature>
<feature type="modified residue" description="N6-acetyllysine" evidence="2">
    <location>
        <position position="53"/>
    </location>
</feature>
<feature type="modified residue" description="Phosphoserine" evidence="2">
    <location>
        <position position="80"/>
    </location>
</feature>
<feature type="modified residue" description="Phosphoserine" evidence="2">
    <location>
        <position position="85"/>
    </location>
</feature>
<feature type="cross-link" description="Glycyl lysine isopeptide (Lys-Gly) (interchain with G-Cter in SUMO2)" evidence="2">
    <location>
        <position position="29"/>
    </location>
</feature>
<feature type="cross-link" description="Glycyl lysine isopeptide (Lys-Gly) (interchain with G-Cter in SUMO2)" evidence="2">
    <location>
        <position position="110"/>
    </location>
</feature>
<feature type="non-consecutive residues" evidence="7">
    <location>
        <begin position="12"/>
        <end position="13"/>
    </location>
</feature>
<feature type="non-consecutive residues" evidence="7">
    <location>
        <begin position="21"/>
        <end position="22"/>
    </location>
</feature>
<feature type="non-consecutive residues" evidence="7">
    <location>
        <begin position="29"/>
        <end position="30"/>
    </location>
</feature>
<feature type="non-consecutive residues" evidence="7">
    <location>
        <begin position="44"/>
        <end position="45"/>
    </location>
</feature>
<feature type="non-consecutive residues" evidence="7">
    <location>
        <begin position="79"/>
        <end position="80"/>
    </location>
</feature>
<feature type="non-consecutive residues" evidence="7">
    <location>
        <begin position="91"/>
        <end position="92"/>
    </location>
</feature>
<feature type="non-consecutive residues" evidence="7">
    <location>
        <begin position="98"/>
        <end position="99"/>
    </location>
</feature>
<feature type="non-terminal residue">
    <location>
        <position position="1"/>
    </location>
</feature>
<feature type="non-terminal residue">
    <location>
        <position position="110"/>
    </location>
</feature>
<gene>
    <name evidence="2" type="primary">KRT8</name>
</gene>
<protein>
    <recommendedName>
        <fullName evidence="2">Keratin, type II cytoskeletal 8</fullName>
    </recommendedName>
    <alternativeName>
        <fullName evidence="2">Cytokeratin-8</fullName>
        <shortName evidence="2">CK-8</shortName>
    </alternativeName>
    <alternativeName>
        <fullName evidence="2">Keratin-8</fullName>
        <shortName evidence="2">K8</shortName>
    </alternativeName>
</protein>
<accession>P86247</accession>